<dbReference type="EC" id="3.6.5.3" evidence="2"/>
<dbReference type="EMBL" id="CP000575">
    <property type="protein sequence ID" value="ABN69911.1"/>
    <property type="molecule type" value="Genomic_DNA"/>
</dbReference>
<dbReference type="RefSeq" id="WP_011839102.1">
    <property type="nucleotide sequence ID" value="NC_009033.1"/>
</dbReference>
<dbReference type="SMR" id="A3DMQ1"/>
<dbReference type="STRING" id="399550.Smar_0810"/>
<dbReference type="GeneID" id="4907240"/>
<dbReference type="KEGG" id="smr:Smar_0810"/>
<dbReference type="eggNOG" id="arCOG01561">
    <property type="taxonomic scope" value="Archaea"/>
</dbReference>
<dbReference type="HOGENOM" id="CLU_007265_3_5_2"/>
<dbReference type="OrthoDB" id="371718at2157"/>
<dbReference type="Proteomes" id="UP000000254">
    <property type="component" value="Chromosome"/>
</dbReference>
<dbReference type="GO" id="GO:0005737">
    <property type="term" value="C:cytoplasm"/>
    <property type="evidence" value="ECO:0007669"/>
    <property type="project" value="UniProtKB-SubCell"/>
</dbReference>
<dbReference type="GO" id="GO:0005525">
    <property type="term" value="F:GTP binding"/>
    <property type="evidence" value="ECO:0007669"/>
    <property type="project" value="UniProtKB-UniRule"/>
</dbReference>
<dbReference type="GO" id="GO:0003924">
    <property type="term" value="F:GTPase activity"/>
    <property type="evidence" value="ECO:0007669"/>
    <property type="project" value="InterPro"/>
</dbReference>
<dbReference type="GO" id="GO:0003746">
    <property type="term" value="F:translation elongation factor activity"/>
    <property type="evidence" value="ECO:0007669"/>
    <property type="project" value="UniProtKB-UniRule"/>
</dbReference>
<dbReference type="CDD" id="cd01883">
    <property type="entry name" value="EF1_alpha"/>
    <property type="match status" value="1"/>
</dbReference>
<dbReference type="CDD" id="cd03693">
    <property type="entry name" value="EF1_alpha_II"/>
    <property type="match status" value="1"/>
</dbReference>
<dbReference type="CDD" id="cd03705">
    <property type="entry name" value="EF1_alpha_III"/>
    <property type="match status" value="1"/>
</dbReference>
<dbReference type="FunFam" id="2.40.30.10:FF:000003">
    <property type="entry name" value="Elongation factor 1-alpha"/>
    <property type="match status" value="1"/>
</dbReference>
<dbReference type="FunFam" id="2.40.30.10:FF:000005">
    <property type="entry name" value="Elongation factor 1-alpha"/>
    <property type="match status" value="1"/>
</dbReference>
<dbReference type="FunFam" id="3.40.50.300:FF:000255">
    <property type="entry name" value="Elongation factor 1-alpha"/>
    <property type="match status" value="1"/>
</dbReference>
<dbReference type="Gene3D" id="3.40.50.300">
    <property type="entry name" value="P-loop containing nucleotide triphosphate hydrolases"/>
    <property type="match status" value="1"/>
</dbReference>
<dbReference type="Gene3D" id="2.40.30.10">
    <property type="entry name" value="Translation factors"/>
    <property type="match status" value="2"/>
</dbReference>
<dbReference type="HAMAP" id="MF_00118_A">
    <property type="entry name" value="EF_Tu_A"/>
    <property type="match status" value="1"/>
</dbReference>
<dbReference type="InterPro" id="IPR004161">
    <property type="entry name" value="EFTu-like_2"/>
</dbReference>
<dbReference type="InterPro" id="IPR031157">
    <property type="entry name" value="G_TR_CS"/>
</dbReference>
<dbReference type="InterPro" id="IPR054696">
    <property type="entry name" value="GTP-eEF1A_C"/>
</dbReference>
<dbReference type="InterPro" id="IPR027417">
    <property type="entry name" value="P-loop_NTPase"/>
</dbReference>
<dbReference type="InterPro" id="IPR005225">
    <property type="entry name" value="Small_GTP-bd"/>
</dbReference>
<dbReference type="InterPro" id="IPR000795">
    <property type="entry name" value="T_Tr_GTP-bd_dom"/>
</dbReference>
<dbReference type="InterPro" id="IPR050100">
    <property type="entry name" value="TRAFAC_GTPase_members"/>
</dbReference>
<dbReference type="InterPro" id="IPR009000">
    <property type="entry name" value="Transl_B-barrel_sf"/>
</dbReference>
<dbReference type="InterPro" id="IPR009001">
    <property type="entry name" value="Transl_elong_EF1A/Init_IF2_C"/>
</dbReference>
<dbReference type="InterPro" id="IPR004539">
    <property type="entry name" value="Transl_elong_EF1A_euk/arc"/>
</dbReference>
<dbReference type="NCBIfam" id="TIGR00483">
    <property type="entry name" value="EF-1_alpha"/>
    <property type="match status" value="1"/>
</dbReference>
<dbReference type="NCBIfam" id="NF008969">
    <property type="entry name" value="PRK12317.1"/>
    <property type="match status" value="1"/>
</dbReference>
<dbReference type="NCBIfam" id="TIGR00231">
    <property type="entry name" value="small_GTP"/>
    <property type="match status" value="1"/>
</dbReference>
<dbReference type="PANTHER" id="PTHR23115">
    <property type="entry name" value="TRANSLATION FACTOR"/>
    <property type="match status" value="1"/>
</dbReference>
<dbReference type="Pfam" id="PF22594">
    <property type="entry name" value="GTP-eEF1A_C"/>
    <property type="match status" value="1"/>
</dbReference>
<dbReference type="Pfam" id="PF00009">
    <property type="entry name" value="GTP_EFTU"/>
    <property type="match status" value="1"/>
</dbReference>
<dbReference type="Pfam" id="PF03144">
    <property type="entry name" value="GTP_EFTU_D2"/>
    <property type="match status" value="1"/>
</dbReference>
<dbReference type="PRINTS" id="PR00315">
    <property type="entry name" value="ELONGATNFCT"/>
</dbReference>
<dbReference type="SUPFAM" id="SSF50465">
    <property type="entry name" value="EF-Tu/eEF-1alpha/eIF2-gamma C-terminal domain"/>
    <property type="match status" value="1"/>
</dbReference>
<dbReference type="SUPFAM" id="SSF52540">
    <property type="entry name" value="P-loop containing nucleoside triphosphate hydrolases"/>
    <property type="match status" value="1"/>
</dbReference>
<dbReference type="SUPFAM" id="SSF50447">
    <property type="entry name" value="Translation proteins"/>
    <property type="match status" value="1"/>
</dbReference>
<dbReference type="PROSITE" id="PS00301">
    <property type="entry name" value="G_TR_1"/>
    <property type="match status" value="1"/>
</dbReference>
<dbReference type="PROSITE" id="PS51722">
    <property type="entry name" value="G_TR_2"/>
    <property type="match status" value="1"/>
</dbReference>
<proteinExistence type="inferred from homology"/>
<organism>
    <name type="scientific">Staphylothermus marinus (strain ATCC 43588 / DSM 3639 / JCM 9404 / F1)</name>
    <dbReference type="NCBI Taxonomy" id="399550"/>
    <lineage>
        <taxon>Archaea</taxon>
        <taxon>Thermoproteota</taxon>
        <taxon>Thermoprotei</taxon>
        <taxon>Desulfurococcales</taxon>
        <taxon>Desulfurococcaceae</taxon>
        <taxon>Staphylothermus</taxon>
    </lineage>
</organism>
<evidence type="ECO:0000250" key="1"/>
<evidence type="ECO:0000255" key="2">
    <source>
        <dbReference type="HAMAP-Rule" id="MF_00118"/>
    </source>
</evidence>
<name>EF1A_STAMF</name>
<reference key="1">
    <citation type="journal article" date="2009" name="BMC Genomics">
        <title>The complete genome sequence of Staphylothermus marinus reveals differences in sulfur metabolism among heterotrophic Crenarchaeota.</title>
        <authorList>
            <person name="Anderson I.J."/>
            <person name="Dharmarajan L."/>
            <person name="Rodriguez J."/>
            <person name="Hooper S."/>
            <person name="Porat I."/>
            <person name="Ulrich L.E."/>
            <person name="Elkins J.G."/>
            <person name="Mavromatis K."/>
            <person name="Sun H."/>
            <person name="Land M."/>
            <person name="Lapidus A."/>
            <person name="Lucas S."/>
            <person name="Barry K."/>
            <person name="Huber H."/>
            <person name="Zhulin I.B."/>
            <person name="Whitman W.B."/>
            <person name="Mukhopadhyay B."/>
            <person name="Woese C."/>
            <person name="Bristow J."/>
            <person name="Kyrpides N."/>
        </authorList>
    </citation>
    <scope>NUCLEOTIDE SEQUENCE [LARGE SCALE GENOMIC DNA]</scope>
    <source>
        <strain>ATCC 43588 / DSM 3639 / JCM 9404 / F1</strain>
    </source>
</reference>
<reference key="2">
    <citation type="journal article" date="2009" name="Stand. Genomic Sci.">
        <title>Complete genome sequence of Staphylothermus marinus Stetter and Fiala 1986 type strain F1.</title>
        <authorList>
            <person name="Anderson I.J."/>
            <person name="Sun H."/>
            <person name="Lapidus A."/>
            <person name="Copeland A."/>
            <person name="Glavina Del Rio T."/>
            <person name="Tice H."/>
            <person name="Dalin E."/>
            <person name="Lucas S."/>
            <person name="Barry K."/>
            <person name="Land M."/>
            <person name="Richardson P."/>
            <person name="Huber H."/>
            <person name="Kyrpides N.C."/>
        </authorList>
    </citation>
    <scope>NUCLEOTIDE SEQUENCE [LARGE SCALE GENOMIC DNA]</scope>
    <source>
        <strain>ATCC 43588 / DSM 3639 / JCM 9404 / F1</strain>
    </source>
</reference>
<protein>
    <recommendedName>
        <fullName evidence="2">Elongation factor 1-alpha</fullName>
        <shortName evidence="2">EF-1-alpha</shortName>
        <ecNumber evidence="2">3.6.5.3</ecNumber>
    </recommendedName>
    <alternativeName>
        <fullName evidence="2">Elongation factor Tu</fullName>
        <shortName evidence="2">EF-Tu</shortName>
    </alternativeName>
</protein>
<gene>
    <name evidence="2" type="primary">tuf</name>
    <name type="ordered locus">Smar_0810</name>
</gene>
<keyword id="KW-0963">Cytoplasm</keyword>
<keyword id="KW-0251">Elongation factor</keyword>
<keyword id="KW-0342">GTP-binding</keyword>
<keyword id="KW-0378">Hydrolase</keyword>
<keyword id="KW-0460">Magnesium</keyword>
<keyword id="KW-0479">Metal-binding</keyword>
<keyword id="KW-0547">Nucleotide-binding</keyword>
<keyword id="KW-0648">Protein biosynthesis</keyword>
<keyword id="KW-1185">Reference proteome</keyword>
<sequence>MSSGKPHLNLVVIGHVDHGKSTLVGHILYRLGLVDQKTIQMLEEEAKKRGKESFKFAWLLDKLKEERERGVTIALTYMKFETRRYIFTIIDAPGHRDFVKNMITGASQADAALLVVSARKGEFEAGMSPEGQTREHAILAKTMGINQLIVAVNKMDATEPPWSQKRYEQIKTILGKFLKSLGYDISKVPFIPVSAWTGDNLIERSPNMPWYNGPTLVEALDSLEPPPKPIDKPLRIPIQDVYAISGVGTVPVGRVETGVLRVGDKVVFMPPAKVGEVRSIETHHVRIEKAEPGDNIGFNVRGVSKRDIRRGDVAGHLDNPPTVAEEFTARVFIIWHPTAITVGYTPVIHIHTASVASRIVEIKAKLDPRTGKVVEENPQFIKMGDAAIVRFKPIKPLVVEKYSDFPPLGRFAMRDMGKTIGIGVVVDVKPMKIEIKTK</sequence>
<comment type="function">
    <text evidence="2">GTP hydrolase that promotes the GTP-dependent binding of aminoacyl-tRNA to the A-site of ribosomes during protein biosynthesis.</text>
</comment>
<comment type="catalytic activity">
    <reaction evidence="2">
        <text>GTP + H2O = GDP + phosphate + H(+)</text>
        <dbReference type="Rhea" id="RHEA:19669"/>
        <dbReference type="ChEBI" id="CHEBI:15377"/>
        <dbReference type="ChEBI" id="CHEBI:15378"/>
        <dbReference type="ChEBI" id="CHEBI:37565"/>
        <dbReference type="ChEBI" id="CHEBI:43474"/>
        <dbReference type="ChEBI" id="CHEBI:58189"/>
        <dbReference type="EC" id="3.6.5.3"/>
    </reaction>
    <physiologicalReaction direction="left-to-right" evidence="2">
        <dbReference type="Rhea" id="RHEA:19670"/>
    </physiologicalReaction>
</comment>
<comment type="subcellular location">
    <subcellularLocation>
        <location evidence="2">Cytoplasm</location>
    </subcellularLocation>
</comment>
<comment type="similarity">
    <text evidence="2">Belongs to the TRAFAC class translation factor GTPase superfamily. Classic translation factor GTPase family. EF-Tu/EF-1A subfamily.</text>
</comment>
<feature type="chain" id="PRO_1000015753" description="Elongation factor 1-alpha">
    <location>
        <begin position="1"/>
        <end position="438"/>
    </location>
</feature>
<feature type="domain" description="tr-type G">
    <location>
        <begin position="5"/>
        <end position="228"/>
    </location>
</feature>
<feature type="region of interest" description="G1" evidence="1">
    <location>
        <begin position="14"/>
        <end position="21"/>
    </location>
</feature>
<feature type="region of interest" description="G2" evidence="1">
    <location>
        <begin position="70"/>
        <end position="74"/>
    </location>
</feature>
<feature type="region of interest" description="G3" evidence="1">
    <location>
        <begin position="91"/>
        <end position="94"/>
    </location>
</feature>
<feature type="region of interest" description="G4" evidence="1">
    <location>
        <begin position="153"/>
        <end position="156"/>
    </location>
</feature>
<feature type="region of interest" description="G5" evidence="1">
    <location>
        <begin position="194"/>
        <end position="196"/>
    </location>
</feature>
<feature type="binding site" evidence="2">
    <location>
        <begin position="14"/>
        <end position="21"/>
    </location>
    <ligand>
        <name>GTP</name>
        <dbReference type="ChEBI" id="CHEBI:37565"/>
    </ligand>
</feature>
<feature type="binding site" evidence="2">
    <location>
        <position position="21"/>
    </location>
    <ligand>
        <name>Mg(2+)</name>
        <dbReference type="ChEBI" id="CHEBI:18420"/>
    </ligand>
</feature>
<feature type="binding site" evidence="2">
    <location>
        <begin position="91"/>
        <end position="95"/>
    </location>
    <ligand>
        <name>GTP</name>
        <dbReference type="ChEBI" id="CHEBI:37565"/>
    </ligand>
</feature>
<feature type="binding site" evidence="2">
    <location>
        <begin position="153"/>
        <end position="156"/>
    </location>
    <ligand>
        <name>GTP</name>
        <dbReference type="ChEBI" id="CHEBI:37565"/>
    </ligand>
</feature>
<accession>A3DMQ1</accession>